<comment type="function">
    <text evidence="2">Component of the ubiquinol-cytochrome c reductase complex (complex III or cytochrome b-c1 complex) that is part of the mitochondrial respiratory chain. The b-c1 complex mediates electron transfer from ubiquinol to cytochrome c. Contributes to the generation of a proton gradient across the mitochondrial membrane that is then used for ATP synthesis.</text>
</comment>
<comment type="cofactor">
    <cofactor evidence="2">
        <name>heme b</name>
        <dbReference type="ChEBI" id="CHEBI:60344"/>
    </cofactor>
    <text evidence="2">Binds 2 heme b groups non-covalently.</text>
</comment>
<comment type="subunit">
    <text evidence="2">The cytochrome bc1 complex contains 3 respiratory subunits (MT-CYB, CYC1 and UQCRFS1), 2 core proteins (UQCRC1 and UQCRC2) and probably 6 low-molecular weight proteins.</text>
</comment>
<comment type="subcellular location">
    <subcellularLocation>
        <location evidence="2">Mitochondrion inner membrane</location>
        <topology evidence="2">Multi-pass membrane protein</topology>
    </subcellularLocation>
</comment>
<comment type="miscellaneous">
    <text evidence="1">Heme 1 (or BL or b562) is low-potential and absorbs at about 562 nm, and heme 2 (or BH or b566) is high-potential and absorbs at about 566 nm.</text>
</comment>
<comment type="similarity">
    <text evidence="3 4">Belongs to the cytochrome b family.</text>
</comment>
<comment type="caution">
    <text evidence="2">The full-length protein contains only eight transmembrane helices, not nine as predicted by bioinformatics tools.</text>
</comment>
<accession>Q9MLI6</accession>
<geneLocation type="mitochondrion"/>
<sequence length="372" mass="42399">MSNQHILLMSNLLPVGSNISTWWNFGSMLLTCLAMQTLTGFFLAIHYTANINLAFSSVIHITRDVPYGWTMQNLHAIGASMFFICIYIHIARGIYYGSYLNKEVWLSGITLLITLMATAFFGYVLPWGQMSFWAATVITNLLTAIPYLGTTLTTWLWGGFSINDPTLTRFFALHFILPFIIISLTSIHIILLHNEGSSNPPGTNSDIDKIPFHPYHSYKDMLMVTTMITLLFLILSFSPDLLNDPENFSKANPMITPQHIKPEWYFLFAYGILRSIPNKLGGTLALLMSIAILMTTPFTHTSYTRSMTFRPLTQILFWTLVATFITLTWTATKPVESPFIIISQMTSIFYFFFFIMNPILGWTENKIMMMND</sequence>
<keyword id="KW-0249">Electron transport</keyword>
<keyword id="KW-0349">Heme</keyword>
<keyword id="KW-0408">Iron</keyword>
<keyword id="KW-0472">Membrane</keyword>
<keyword id="KW-0479">Metal-binding</keyword>
<keyword id="KW-0496">Mitochondrion</keyword>
<keyword id="KW-0999">Mitochondrion inner membrane</keyword>
<keyword id="KW-0679">Respiratory chain</keyword>
<keyword id="KW-0812">Transmembrane</keyword>
<keyword id="KW-1133">Transmembrane helix</keyword>
<keyword id="KW-0813">Transport</keyword>
<keyword id="KW-0830">Ubiquinone</keyword>
<organism>
    <name type="scientific">Ophiophagus hannah</name>
    <name type="common">King cobra</name>
    <name type="synonym">Naja hannah</name>
    <dbReference type="NCBI Taxonomy" id="8665"/>
    <lineage>
        <taxon>Eukaryota</taxon>
        <taxon>Metazoa</taxon>
        <taxon>Chordata</taxon>
        <taxon>Craniata</taxon>
        <taxon>Vertebrata</taxon>
        <taxon>Euteleostomi</taxon>
        <taxon>Lepidosauria</taxon>
        <taxon>Squamata</taxon>
        <taxon>Bifurcata</taxon>
        <taxon>Unidentata</taxon>
        <taxon>Episquamata</taxon>
        <taxon>Toxicofera</taxon>
        <taxon>Serpentes</taxon>
        <taxon>Colubroidea</taxon>
        <taxon>Elapidae</taxon>
        <taxon>Elapinae</taxon>
        <taxon>Ophiophagus</taxon>
    </lineage>
</organism>
<name>CYB_OPHHA</name>
<feature type="chain" id="PRO_0000061319" description="Cytochrome b">
    <location>
        <begin position="1"/>
        <end position="372"/>
    </location>
</feature>
<feature type="transmembrane region" description="Helical" evidence="2">
    <location>
        <begin position="25"/>
        <end position="45"/>
    </location>
</feature>
<feature type="transmembrane region" description="Helical" evidence="2">
    <location>
        <begin position="69"/>
        <end position="90"/>
    </location>
</feature>
<feature type="transmembrane region" description="Helical" evidence="2">
    <location>
        <begin position="105"/>
        <end position="125"/>
    </location>
</feature>
<feature type="transmembrane region" description="Helical" evidence="2">
    <location>
        <begin position="170"/>
        <end position="190"/>
    </location>
</feature>
<feature type="transmembrane region" description="Helical" evidence="2">
    <location>
        <begin position="218"/>
        <end position="238"/>
    </location>
</feature>
<feature type="transmembrane region" description="Helical" evidence="2">
    <location>
        <begin position="280"/>
        <end position="300"/>
    </location>
</feature>
<feature type="transmembrane region" description="Helical" evidence="2">
    <location>
        <begin position="312"/>
        <end position="332"/>
    </location>
</feature>
<feature type="transmembrane region" description="Helical" evidence="2">
    <location>
        <begin position="339"/>
        <end position="358"/>
    </location>
</feature>
<feature type="binding site" description="axial binding residue" evidence="2">
    <location>
        <position position="75"/>
    </location>
    <ligand>
        <name>heme b</name>
        <dbReference type="ChEBI" id="CHEBI:60344"/>
        <label>b562</label>
    </ligand>
    <ligandPart>
        <name>Fe</name>
        <dbReference type="ChEBI" id="CHEBI:18248"/>
    </ligandPart>
</feature>
<feature type="binding site" description="axial binding residue" evidence="2">
    <location>
        <position position="89"/>
    </location>
    <ligand>
        <name>heme b</name>
        <dbReference type="ChEBI" id="CHEBI:60344"/>
        <label>b566</label>
    </ligand>
    <ligandPart>
        <name>Fe</name>
        <dbReference type="ChEBI" id="CHEBI:18248"/>
    </ligandPart>
</feature>
<feature type="binding site" description="axial binding residue" evidence="2">
    <location>
        <position position="174"/>
    </location>
    <ligand>
        <name>heme b</name>
        <dbReference type="ChEBI" id="CHEBI:60344"/>
        <label>b562</label>
    </ligand>
    <ligandPart>
        <name>Fe</name>
        <dbReference type="ChEBI" id="CHEBI:18248"/>
    </ligandPart>
</feature>
<feature type="binding site" description="axial binding residue" evidence="2">
    <location>
        <position position="188"/>
    </location>
    <ligand>
        <name>heme b</name>
        <dbReference type="ChEBI" id="CHEBI:60344"/>
        <label>b566</label>
    </ligand>
    <ligandPart>
        <name>Fe</name>
        <dbReference type="ChEBI" id="CHEBI:18248"/>
    </ligandPart>
</feature>
<feature type="binding site" evidence="2">
    <location>
        <position position="193"/>
    </location>
    <ligand>
        <name>a ubiquinone</name>
        <dbReference type="ChEBI" id="CHEBI:16389"/>
    </ligand>
</feature>
<reference key="1">
    <citation type="journal article" date="2000" name="Mol. Phylogenet. Evol.">
        <title>Phylogenetic relationships of elapid snakes based on cytochrome b mtDNA sequences.</title>
        <authorList>
            <person name="Slowinski J.B."/>
            <person name="Keogh J.S."/>
        </authorList>
    </citation>
    <scope>NUCLEOTIDE SEQUENCE [GENOMIC DNA]</scope>
</reference>
<proteinExistence type="inferred from homology"/>
<dbReference type="EMBL" id="AF217842">
    <property type="protein sequence ID" value="AAF37261.1"/>
    <property type="molecule type" value="Genomic_DNA"/>
</dbReference>
<dbReference type="SMR" id="Q9MLI6"/>
<dbReference type="GO" id="GO:0005743">
    <property type="term" value="C:mitochondrial inner membrane"/>
    <property type="evidence" value="ECO:0007669"/>
    <property type="project" value="UniProtKB-SubCell"/>
</dbReference>
<dbReference type="GO" id="GO:0045275">
    <property type="term" value="C:respiratory chain complex III"/>
    <property type="evidence" value="ECO:0007669"/>
    <property type="project" value="InterPro"/>
</dbReference>
<dbReference type="GO" id="GO:0046872">
    <property type="term" value="F:metal ion binding"/>
    <property type="evidence" value="ECO:0007669"/>
    <property type="project" value="UniProtKB-KW"/>
</dbReference>
<dbReference type="GO" id="GO:0008121">
    <property type="term" value="F:ubiquinol-cytochrome-c reductase activity"/>
    <property type="evidence" value="ECO:0007669"/>
    <property type="project" value="InterPro"/>
</dbReference>
<dbReference type="GO" id="GO:0006122">
    <property type="term" value="P:mitochondrial electron transport, ubiquinol to cytochrome c"/>
    <property type="evidence" value="ECO:0007669"/>
    <property type="project" value="TreeGrafter"/>
</dbReference>
<dbReference type="CDD" id="cd00290">
    <property type="entry name" value="cytochrome_b_C"/>
    <property type="match status" value="1"/>
</dbReference>
<dbReference type="CDD" id="cd00284">
    <property type="entry name" value="Cytochrome_b_N"/>
    <property type="match status" value="1"/>
</dbReference>
<dbReference type="Gene3D" id="1.20.810.10">
    <property type="entry name" value="Cytochrome Bc1 Complex, Chain C"/>
    <property type="match status" value="1"/>
</dbReference>
<dbReference type="InterPro" id="IPR005798">
    <property type="entry name" value="Cyt_b/b6_C"/>
</dbReference>
<dbReference type="InterPro" id="IPR036150">
    <property type="entry name" value="Cyt_b/b6_C_sf"/>
</dbReference>
<dbReference type="InterPro" id="IPR005797">
    <property type="entry name" value="Cyt_b/b6_N"/>
</dbReference>
<dbReference type="InterPro" id="IPR027387">
    <property type="entry name" value="Cytb/b6-like_sf"/>
</dbReference>
<dbReference type="InterPro" id="IPR030689">
    <property type="entry name" value="Cytochrome_b"/>
</dbReference>
<dbReference type="InterPro" id="IPR048260">
    <property type="entry name" value="Cytochrome_b_C_euk/bac"/>
</dbReference>
<dbReference type="InterPro" id="IPR048259">
    <property type="entry name" value="Cytochrome_b_N_euk/bac"/>
</dbReference>
<dbReference type="InterPro" id="IPR016174">
    <property type="entry name" value="Di-haem_cyt_TM"/>
</dbReference>
<dbReference type="PANTHER" id="PTHR19271">
    <property type="entry name" value="CYTOCHROME B"/>
    <property type="match status" value="1"/>
</dbReference>
<dbReference type="PANTHER" id="PTHR19271:SF16">
    <property type="entry name" value="CYTOCHROME B"/>
    <property type="match status" value="1"/>
</dbReference>
<dbReference type="Pfam" id="PF00032">
    <property type="entry name" value="Cytochrom_B_C"/>
    <property type="match status" value="1"/>
</dbReference>
<dbReference type="Pfam" id="PF00033">
    <property type="entry name" value="Cytochrome_B"/>
    <property type="match status" value="1"/>
</dbReference>
<dbReference type="PIRSF" id="PIRSF038885">
    <property type="entry name" value="COB"/>
    <property type="match status" value="1"/>
</dbReference>
<dbReference type="SUPFAM" id="SSF81648">
    <property type="entry name" value="a domain/subunit of cytochrome bc1 complex (Ubiquinol-cytochrome c reductase)"/>
    <property type="match status" value="1"/>
</dbReference>
<dbReference type="SUPFAM" id="SSF81342">
    <property type="entry name" value="Transmembrane di-heme cytochromes"/>
    <property type="match status" value="1"/>
</dbReference>
<dbReference type="PROSITE" id="PS51003">
    <property type="entry name" value="CYTB_CTER"/>
    <property type="match status" value="1"/>
</dbReference>
<dbReference type="PROSITE" id="PS51002">
    <property type="entry name" value="CYTB_NTER"/>
    <property type="match status" value="1"/>
</dbReference>
<protein>
    <recommendedName>
        <fullName>Cytochrome b</fullName>
    </recommendedName>
    <alternativeName>
        <fullName>Complex III subunit 3</fullName>
    </alternativeName>
    <alternativeName>
        <fullName>Complex III subunit III</fullName>
    </alternativeName>
    <alternativeName>
        <fullName>Cytochrome b-c1 complex subunit 3</fullName>
    </alternativeName>
    <alternativeName>
        <fullName>Ubiquinol-cytochrome-c reductase complex cytochrome b subunit</fullName>
    </alternativeName>
</protein>
<evidence type="ECO:0000250" key="1"/>
<evidence type="ECO:0000250" key="2">
    <source>
        <dbReference type="UniProtKB" id="P00157"/>
    </source>
</evidence>
<evidence type="ECO:0000255" key="3">
    <source>
        <dbReference type="PROSITE-ProRule" id="PRU00967"/>
    </source>
</evidence>
<evidence type="ECO:0000255" key="4">
    <source>
        <dbReference type="PROSITE-ProRule" id="PRU00968"/>
    </source>
</evidence>
<gene>
    <name type="primary">MT-CYB</name>
    <name type="synonym">COB</name>
    <name type="synonym">CYTB</name>
    <name type="synonym">MTCYB</name>
</gene>